<protein>
    <recommendedName>
        <fullName evidence="1">Chaperone protein DnaJ</fullName>
    </recommendedName>
</protein>
<sequence length="379" mass="41725">MAKKDYYEILGLDKGASDQDIKKAFRKLALKYHPDRNPNDKKAEEKFKEINEAYQVLTDPQKKAQYDQFGTTDFNGGGFQGGFGGFDFSDLGGFGDIFDSFFGGGFSSGRRKNGPERGSDLEYTLSLTFEEAVFGVEKEISVTRNERCETCNGTGAKKGSHPHTCDKCNGTGQVRHQRSTPLGNFVTMTTCDKCGGRGTIIKNPCEECRGKGIVRKHRKIKVKVPAGVDTGNIIPIRGQGEHGKNGGPSGDLYINLRVSPHSKFKRKGFDIYLDAHISFGKAALGTSLKVPSIDGDVKYEIPPGTQPGTVFRLKGKGVPKVDGRGRGDQYVNVIVDIPKNLNEKQKEALMMFMEASGEIQPRDVEKKSFIDKIFKNDSK</sequence>
<name>DNAJ_CLOK5</name>
<dbReference type="EMBL" id="CP000673">
    <property type="protein sequence ID" value="EDK32954.1"/>
    <property type="molecule type" value="Genomic_DNA"/>
</dbReference>
<dbReference type="RefSeq" id="WP_012101283.1">
    <property type="nucleotide sequence ID" value="NC_009706.1"/>
</dbReference>
<dbReference type="SMR" id="A5N6M3"/>
<dbReference type="STRING" id="431943.CKL_0903"/>
<dbReference type="KEGG" id="ckl:CKL_0903"/>
<dbReference type="eggNOG" id="COG0484">
    <property type="taxonomic scope" value="Bacteria"/>
</dbReference>
<dbReference type="HOGENOM" id="CLU_017633_0_7_9"/>
<dbReference type="Proteomes" id="UP000002411">
    <property type="component" value="Chromosome"/>
</dbReference>
<dbReference type="GO" id="GO:0005737">
    <property type="term" value="C:cytoplasm"/>
    <property type="evidence" value="ECO:0007669"/>
    <property type="project" value="UniProtKB-SubCell"/>
</dbReference>
<dbReference type="GO" id="GO:0005524">
    <property type="term" value="F:ATP binding"/>
    <property type="evidence" value="ECO:0007669"/>
    <property type="project" value="InterPro"/>
</dbReference>
<dbReference type="GO" id="GO:0031072">
    <property type="term" value="F:heat shock protein binding"/>
    <property type="evidence" value="ECO:0007669"/>
    <property type="project" value="InterPro"/>
</dbReference>
<dbReference type="GO" id="GO:0051082">
    <property type="term" value="F:unfolded protein binding"/>
    <property type="evidence" value="ECO:0007669"/>
    <property type="project" value="UniProtKB-UniRule"/>
</dbReference>
<dbReference type="GO" id="GO:0008270">
    <property type="term" value="F:zinc ion binding"/>
    <property type="evidence" value="ECO:0007669"/>
    <property type="project" value="UniProtKB-UniRule"/>
</dbReference>
<dbReference type="GO" id="GO:0051085">
    <property type="term" value="P:chaperone cofactor-dependent protein refolding"/>
    <property type="evidence" value="ECO:0007669"/>
    <property type="project" value="TreeGrafter"/>
</dbReference>
<dbReference type="GO" id="GO:0006260">
    <property type="term" value="P:DNA replication"/>
    <property type="evidence" value="ECO:0007669"/>
    <property type="project" value="UniProtKB-KW"/>
</dbReference>
<dbReference type="GO" id="GO:0042026">
    <property type="term" value="P:protein refolding"/>
    <property type="evidence" value="ECO:0007669"/>
    <property type="project" value="TreeGrafter"/>
</dbReference>
<dbReference type="GO" id="GO:0009408">
    <property type="term" value="P:response to heat"/>
    <property type="evidence" value="ECO:0007669"/>
    <property type="project" value="InterPro"/>
</dbReference>
<dbReference type="CDD" id="cd06257">
    <property type="entry name" value="DnaJ"/>
    <property type="match status" value="1"/>
</dbReference>
<dbReference type="CDD" id="cd10747">
    <property type="entry name" value="DnaJ_C"/>
    <property type="match status" value="1"/>
</dbReference>
<dbReference type="CDD" id="cd10719">
    <property type="entry name" value="DnaJ_zf"/>
    <property type="match status" value="1"/>
</dbReference>
<dbReference type="FunFam" id="1.10.287.110:FF:000034">
    <property type="entry name" value="Chaperone protein DnaJ"/>
    <property type="match status" value="1"/>
</dbReference>
<dbReference type="FunFam" id="2.60.260.20:FF:000005">
    <property type="entry name" value="Chaperone protein dnaJ 1, mitochondrial"/>
    <property type="match status" value="1"/>
</dbReference>
<dbReference type="FunFam" id="2.10.230.10:FF:000002">
    <property type="entry name" value="Molecular chaperone DnaJ"/>
    <property type="match status" value="1"/>
</dbReference>
<dbReference type="Gene3D" id="1.10.287.110">
    <property type="entry name" value="DnaJ domain"/>
    <property type="match status" value="1"/>
</dbReference>
<dbReference type="Gene3D" id="2.10.230.10">
    <property type="entry name" value="Heat shock protein DnaJ, cysteine-rich domain"/>
    <property type="match status" value="1"/>
</dbReference>
<dbReference type="Gene3D" id="2.60.260.20">
    <property type="entry name" value="Urease metallochaperone UreE, N-terminal domain"/>
    <property type="match status" value="2"/>
</dbReference>
<dbReference type="HAMAP" id="MF_01152">
    <property type="entry name" value="DnaJ"/>
    <property type="match status" value="1"/>
</dbReference>
<dbReference type="InterPro" id="IPR012724">
    <property type="entry name" value="DnaJ"/>
</dbReference>
<dbReference type="InterPro" id="IPR002939">
    <property type="entry name" value="DnaJ_C"/>
</dbReference>
<dbReference type="InterPro" id="IPR001623">
    <property type="entry name" value="DnaJ_domain"/>
</dbReference>
<dbReference type="InterPro" id="IPR018253">
    <property type="entry name" value="DnaJ_domain_CS"/>
</dbReference>
<dbReference type="InterPro" id="IPR008971">
    <property type="entry name" value="HSP40/DnaJ_pept-bd"/>
</dbReference>
<dbReference type="InterPro" id="IPR001305">
    <property type="entry name" value="HSP_DnaJ_Cys-rich_dom"/>
</dbReference>
<dbReference type="InterPro" id="IPR036410">
    <property type="entry name" value="HSP_DnaJ_Cys-rich_dom_sf"/>
</dbReference>
<dbReference type="InterPro" id="IPR036869">
    <property type="entry name" value="J_dom_sf"/>
</dbReference>
<dbReference type="NCBIfam" id="TIGR02349">
    <property type="entry name" value="DnaJ_bact"/>
    <property type="match status" value="1"/>
</dbReference>
<dbReference type="NCBIfam" id="NF008035">
    <property type="entry name" value="PRK10767.1"/>
    <property type="match status" value="1"/>
</dbReference>
<dbReference type="NCBIfam" id="NF010890">
    <property type="entry name" value="PRK14297.1"/>
    <property type="match status" value="1"/>
</dbReference>
<dbReference type="PANTHER" id="PTHR43096:SF48">
    <property type="entry name" value="CHAPERONE PROTEIN DNAJ"/>
    <property type="match status" value="1"/>
</dbReference>
<dbReference type="PANTHER" id="PTHR43096">
    <property type="entry name" value="DNAJ HOMOLOG 1, MITOCHONDRIAL-RELATED"/>
    <property type="match status" value="1"/>
</dbReference>
<dbReference type="Pfam" id="PF00226">
    <property type="entry name" value="DnaJ"/>
    <property type="match status" value="1"/>
</dbReference>
<dbReference type="Pfam" id="PF01556">
    <property type="entry name" value="DnaJ_C"/>
    <property type="match status" value="1"/>
</dbReference>
<dbReference type="Pfam" id="PF00684">
    <property type="entry name" value="DnaJ_CXXCXGXG"/>
    <property type="match status" value="1"/>
</dbReference>
<dbReference type="PRINTS" id="PR00625">
    <property type="entry name" value="JDOMAIN"/>
</dbReference>
<dbReference type="SMART" id="SM00271">
    <property type="entry name" value="DnaJ"/>
    <property type="match status" value="1"/>
</dbReference>
<dbReference type="SUPFAM" id="SSF46565">
    <property type="entry name" value="Chaperone J-domain"/>
    <property type="match status" value="1"/>
</dbReference>
<dbReference type="SUPFAM" id="SSF57938">
    <property type="entry name" value="DnaJ/Hsp40 cysteine-rich domain"/>
    <property type="match status" value="1"/>
</dbReference>
<dbReference type="SUPFAM" id="SSF49493">
    <property type="entry name" value="HSP40/DnaJ peptide-binding domain"/>
    <property type="match status" value="2"/>
</dbReference>
<dbReference type="PROSITE" id="PS00636">
    <property type="entry name" value="DNAJ_1"/>
    <property type="match status" value="1"/>
</dbReference>
<dbReference type="PROSITE" id="PS50076">
    <property type="entry name" value="DNAJ_2"/>
    <property type="match status" value="1"/>
</dbReference>
<dbReference type="PROSITE" id="PS51188">
    <property type="entry name" value="ZF_CR"/>
    <property type="match status" value="1"/>
</dbReference>
<feature type="chain" id="PRO_1000164253" description="Chaperone protein DnaJ">
    <location>
        <begin position="1"/>
        <end position="379"/>
    </location>
</feature>
<feature type="domain" description="J" evidence="1">
    <location>
        <begin position="5"/>
        <end position="70"/>
    </location>
</feature>
<feature type="repeat" description="CXXCXGXG motif">
    <location>
        <begin position="148"/>
        <end position="155"/>
    </location>
</feature>
<feature type="repeat" description="CXXCXGXG motif">
    <location>
        <begin position="165"/>
        <end position="172"/>
    </location>
</feature>
<feature type="repeat" description="CXXCXGXG motif">
    <location>
        <begin position="191"/>
        <end position="198"/>
    </location>
</feature>
<feature type="repeat" description="CXXCXGXG motif">
    <location>
        <begin position="205"/>
        <end position="212"/>
    </location>
</feature>
<feature type="zinc finger region" description="CR-type" evidence="1">
    <location>
        <begin position="135"/>
        <end position="217"/>
    </location>
</feature>
<feature type="binding site" evidence="1">
    <location>
        <position position="148"/>
    </location>
    <ligand>
        <name>Zn(2+)</name>
        <dbReference type="ChEBI" id="CHEBI:29105"/>
        <label>1</label>
    </ligand>
</feature>
<feature type="binding site" evidence="1">
    <location>
        <position position="151"/>
    </location>
    <ligand>
        <name>Zn(2+)</name>
        <dbReference type="ChEBI" id="CHEBI:29105"/>
        <label>1</label>
    </ligand>
</feature>
<feature type="binding site" evidence="1">
    <location>
        <position position="165"/>
    </location>
    <ligand>
        <name>Zn(2+)</name>
        <dbReference type="ChEBI" id="CHEBI:29105"/>
        <label>2</label>
    </ligand>
</feature>
<feature type="binding site" evidence="1">
    <location>
        <position position="168"/>
    </location>
    <ligand>
        <name>Zn(2+)</name>
        <dbReference type="ChEBI" id="CHEBI:29105"/>
        <label>2</label>
    </ligand>
</feature>
<feature type="binding site" evidence="1">
    <location>
        <position position="191"/>
    </location>
    <ligand>
        <name>Zn(2+)</name>
        <dbReference type="ChEBI" id="CHEBI:29105"/>
        <label>2</label>
    </ligand>
</feature>
<feature type="binding site" evidence="1">
    <location>
        <position position="194"/>
    </location>
    <ligand>
        <name>Zn(2+)</name>
        <dbReference type="ChEBI" id="CHEBI:29105"/>
        <label>2</label>
    </ligand>
</feature>
<feature type="binding site" evidence="1">
    <location>
        <position position="205"/>
    </location>
    <ligand>
        <name>Zn(2+)</name>
        <dbReference type="ChEBI" id="CHEBI:29105"/>
        <label>1</label>
    </ligand>
</feature>
<feature type="binding site" evidence="1">
    <location>
        <position position="208"/>
    </location>
    <ligand>
        <name>Zn(2+)</name>
        <dbReference type="ChEBI" id="CHEBI:29105"/>
        <label>1</label>
    </ligand>
</feature>
<keyword id="KW-0143">Chaperone</keyword>
<keyword id="KW-0963">Cytoplasm</keyword>
<keyword id="KW-0235">DNA replication</keyword>
<keyword id="KW-0479">Metal-binding</keyword>
<keyword id="KW-1185">Reference proteome</keyword>
<keyword id="KW-0677">Repeat</keyword>
<keyword id="KW-0346">Stress response</keyword>
<keyword id="KW-0862">Zinc</keyword>
<keyword id="KW-0863">Zinc-finger</keyword>
<organism>
    <name type="scientific">Clostridium kluyveri (strain ATCC 8527 / DSM 555 / NBRC 12016 / NCIMB 10680 / K1)</name>
    <dbReference type="NCBI Taxonomy" id="431943"/>
    <lineage>
        <taxon>Bacteria</taxon>
        <taxon>Bacillati</taxon>
        <taxon>Bacillota</taxon>
        <taxon>Clostridia</taxon>
        <taxon>Eubacteriales</taxon>
        <taxon>Clostridiaceae</taxon>
        <taxon>Clostridium</taxon>
    </lineage>
</organism>
<reference key="1">
    <citation type="journal article" date="2008" name="Proc. Natl. Acad. Sci. U.S.A.">
        <title>The genome of Clostridium kluyveri, a strict anaerobe with unique metabolic features.</title>
        <authorList>
            <person name="Seedorf H."/>
            <person name="Fricke W.F."/>
            <person name="Veith B."/>
            <person name="Brueggemann H."/>
            <person name="Liesegang H."/>
            <person name="Strittmatter A."/>
            <person name="Miethke M."/>
            <person name="Buckel W."/>
            <person name="Hinderberger J."/>
            <person name="Li F."/>
            <person name="Hagemeier C."/>
            <person name="Thauer R.K."/>
            <person name="Gottschalk G."/>
        </authorList>
    </citation>
    <scope>NUCLEOTIDE SEQUENCE [LARGE SCALE GENOMIC DNA]</scope>
    <source>
        <strain>ATCC 8527 / DSM 555 / NBRC 12016 / NCIMB 10680 / K1</strain>
    </source>
</reference>
<proteinExistence type="inferred from homology"/>
<evidence type="ECO:0000255" key="1">
    <source>
        <dbReference type="HAMAP-Rule" id="MF_01152"/>
    </source>
</evidence>
<accession>A5N6M3</accession>
<gene>
    <name evidence="1" type="primary">dnaJ</name>
    <name type="ordered locus">CKL_0903</name>
</gene>
<comment type="function">
    <text evidence="1">Participates actively in the response to hyperosmotic and heat shock by preventing the aggregation of stress-denatured proteins and by disaggregating proteins, also in an autonomous, DnaK-independent fashion. Unfolded proteins bind initially to DnaJ; upon interaction with the DnaJ-bound protein, DnaK hydrolyzes its bound ATP, resulting in the formation of a stable complex. GrpE releases ADP from DnaK; ATP binding to DnaK triggers the release of the substrate protein, thus completing the reaction cycle. Several rounds of ATP-dependent interactions between DnaJ, DnaK and GrpE are required for fully efficient folding. Also involved, together with DnaK and GrpE, in the DNA replication of plasmids through activation of initiation proteins.</text>
</comment>
<comment type="cofactor">
    <cofactor evidence="1">
        <name>Zn(2+)</name>
        <dbReference type="ChEBI" id="CHEBI:29105"/>
    </cofactor>
    <text evidence="1">Binds 2 Zn(2+) ions per monomer.</text>
</comment>
<comment type="subunit">
    <text evidence="1">Homodimer.</text>
</comment>
<comment type="subcellular location">
    <subcellularLocation>
        <location evidence="1">Cytoplasm</location>
    </subcellularLocation>
</comment>
<comment type="domain">
    <text evidence="1">The J domain is necessary and sufficient to stimulate DnaK ATPase activity. Zinc center 1 plays an important role in the autonomous, DnaK-independent chaperone activity of DnaJ. Zinc center 2 is essential for interaction with DnaK and for DnaJ activity.</text>
</comment>
<comment type="similarity">
    <text evidence="1">Belongs to the DnaJ family.</text>
</comment>